<gene>
    <name evidence="1" type="primary">betB</name>
    <name type="ordered locus">PputW619_0402</name>
</gene>
<feature type="chain" id="PRO_1000133956" description="Betaine aldehyde dehydrogenase">
    <location>
        <begin position="1"/>
        <end position="490"/>
    </location>
</feature>
<feature type="active site" description="Charge relay system" evidence="1">
    <location>
        <position position="162"/>
    </location>
</feature>
<feature type="active site" description="Proton acceptor" evidence="1">
    <location>
        <position position="252"/>
    </location>
</feature>
<feature type="active site" description="Nucleophile" evidence="1">
    <location>
        <position position="286"/>
    </location>
</feature>
<feature type="active site" description="Charge relay system" evidence="1">
    <location>
        <position position="464"/>
    </location>
</feature>
<feature type="binding site" evidence="1">
    <location>
        <position position="27"/>
    </location>
    <ligand>
        <name>K(+)</name>
        <dbReference type="ChEBI" id="CHEBI:29103"/>
        <label>1</label>
    </ligand>
</feature>
<feature type="binding site" evidence="1">
    <location>
        <position position="93"/>
    </location>
    <ligand>
        <name>K(+)</name>
        <dbReference type="ChEBI" id="CHEBI:29103"/>
        <label>1</label>
    </ligand>
</feature>
<feature type="binding site" evidence="1">
    <location>
        <begin position="150"/>
        <end position="152"/>
    </location>
    <ligand>
        <name>NAD(+)</name>
        <dbReference type="ChEBI" id="CHEBI:57540"/>
    </ligand>
</feature>
<feature type="binding site" evidence="1">
    <location>
        <begin position="176"/>
        <end position="179"/>
    </location>
    <ligand>
        <name>NAD(+)</name>
        <dbReference type="ChEBI" id="CHEBI:57540"/>
    </ligand>
</feature>
<feature type="binding site" evidence="1">
    <location>
        <position position="180"/>
    </location>
    <ligand>
        <name>K(+)</name>
        <dbReference type="ChEBI" id="CHEBI:29103"/>
        <label>1</label>
    </ligand>
</feature>
<feature type="binding site" evidence="1">
    <location>
        <begin position="230"/>
        <end position="233"/>
    </location>
    <ligand>
        <name>NAD(+)</name>
        <dbReference type="ChEBI" id="CHEBI:57540"/>
    </ligand>
</feature>
<feature type="binding site" evidence="1">
    <location>
        <position position="246"/>
    </location>
    <ligand>
        <name>K(+)</name>
        <dbReference type="ChEBI" id="CHEBI:29103"/>
        <label>2</label>
    </ligand>
</feature>
<feature type="binding site" evidence="1">
    <location>
        <position position="254"/>
    </location>
    <ligand>
        <name>NAD(+)</name>
        <dbReference type="ChEBI" id="CHEBI:57540"/>
    </ligand>
</feature>
<feature type="binding site" description="covalent" evidence="1">
    <location>
        <position position="286"/>
    </location>
    <ligand>
        <name>NAD(+)</name>
        <dbReference type="ChEBI" id="CHEBI:57540"/>
    </ligand>
</feature>
<feature type="binding site" evidence="1">
    <location>
        <position position="387"/>
    </location>
    <ligand>
        <name>NAD(+)</name>
        <dbReference type="ChEBI" id="CHEBI:57540"/>
    </ligand>
</feature>
<feature type="binding site" evidence="1">
    <location>
        <position position="457"/>
    </location>
    <ligand>
        <name>K(+)</name>
        <dbReference type="ChEBI" id="CHEBI:29103"/>
        <label>2</label>
    </ligand>
</feature>
<feature type="binding site" evidence="1">
    <location>
        <position position="460"/>
    </location>
    <ligand>
        <name>K(+)</name>
        <dbReference type="ChEBI" id="CHEBI:29103"/>
        <label>2</label>
    </ligand>
</feature>
<feature type="site" description="Seems to be a necessary countercharge to the potassium cations" evidence="1">
    <location>
        <position position="248"/>
    </location>
</feature>
<feature type="modified residue" description="Cysteine sulfenic acid (-SOH)" evidence="1">
    <location>
        <position position="286"/>
    </location>
</feature>
<comment type="function">
    <text evidence="1">Involved in the biosynthesis of the osmoprotectant glycine betaine. Catalyzes the irreversible oxidation of betaine aldehyde to the corresponding acid.</text>
</comment>
<comment type="catalytic activity">
    <reaction evidence="1">
        <text>betaine aldehyde + NAD(+) + H2O = glycine betaine + NADH + 2 H(+)</text>
        <dbReference type="Rhea" id="RHEA:15305"/>
        <dbReference type="ChEBI" id="CHEBI:15377"/>
        <dbReference type="ChEBI" id="CHEBI:15378"/>
        <dbReference type="ChEBI" id="CHEBI:15710"/>
        <dbReference type="ChEBI" id="CHEBI:17750"/>
        <dbReference type="ChEBI" id="CHEBI:57540"/>
        <dbReference type="ChEBI" id="CHEBI:57945"/>
        <dbReference type="EC" id="1.2.1.8"/>
    </reaction>
    <physiologicalReaction direction="left-to-right" evidence="1">
        <dbReference type="Rhea" id="RHEA:15306"/>
    </physiologicalReaction>
</comment>
<comment type="cofactor">
    <cofactor evidence="1">
        <name>K(+)</name>
        <dbReference type="ChEBI" id="CHEBI:29103"/>
    </cofactor>
    <text evidence="1">Binds 2 potassium ions per subunit.</text>
</comment>
<comment type="pathway">
    <text evidence="1">Amine and polyamine biosynthesis; betaine biosynthesis via choline pathway; betaine from betaine aldehyde: step 1/1.</text>
</comment>
<comment type="subunit">
    <text evidence="1">Dimer of dimers.</text>
</comment>
<comment type="similarity">
    <text evidence="1">Belongs to the aldehyde dehydrogenase family.</text>
</comment>
<name>BETB_PSEPW</name>
<reference key="1">
    <citation type="submission" date="2008-02" db="EMBL/GenBank/DDBJ databases">
        <title>Complete sequence of Pseudomonas putida W619.</title>
        <authorList>
            <person name="Copeland A."/>
            <person name="Lucas S."/>
            <person name="Lapidus A."/>
            <person name="Barry K."/>
            <person name="Detter J.C."/>
            <person name="Glavina del Rio T."/>
            <person name="Dalin E."/>
            <person name="Tice H."/>
            <person name="Pitluck S."/>
            <person name="Chain P."/>
            <person name="Malfatti S."/>
            <person name="Shin M."/>
            <person name="Vergez L."/>
            <person name="Schmutz J."/>
            <person name="Larimer F."/>
            <person name="Land M."/>
            <person name="Hauser L."/>
            <person name="Kyrpides N."/>
            <person name="Kim E."/>
            <person name="Taghavi S."/>
            <person name="Vangronsveld D."/>
            <person name="van der Lelie D."/>
            <person name="Richardson P."/>
        </authorList>
    </citation>
    <scope>NUCLEOTIDE SEQUENCE [LARGE SCALE GENOMIC DNA]</scope>
    <source>
        <strain>W619</strain>
    </source>
</reference>
<organism>
    <name type="scientific">Pseudomonas putida (strain W619)</name>
    <dbReference type="NCBI Taxonomy" id="390235"/>
    <lineage>
        <taxon>Bacteria</taxon>
        <taxon>Pseudomonadati</taxon>
        <taxon>Pseudomonadota</taxon>
        <taxon>Gammaproteobacteria</taxon>
        <taxon>Pseudomonadales</taxon>
        <taxon>Pseudomonadaceae</taxon>
        <taxon>Pseudomonas</taxon>
    </lineage>
</organism>
<keyword id="KW-0479">Metal-binding</keyword>
<keyword id="KW-0520">NAD</keyword>
<keyword id="KW-0521">NADP</keyword>
<keyword id="KW-0558">Oxidation</keyword>
<keyword id="KW-0560">Oxidoreductase</keyword>
<keyword id="KW-0630">Potassium</keyword>
<evidence type="ECO:0000255" key="1">
    <source>
        <dbReference type="HAMAP-Rule" id="MF_00804"/>
    </source>
</evidence>
<protein>
    <recommendedName>
        <fullName evidence="1">Betaine aldehyde dehydrogenase</fullName>
        <shortName evidence="1">BADH</shortName>
        <ecNumber evidence="1">1.2.1.8</ecNumber>
    </recommendedName>
</protein>
<sequence length="490" mass="53015">MARFGTQKLYIDGGYVDAGSDATFEAINPATGEVLAHVQRATQADVEKAVESAERGQKIWAAMTAMQRSRILRRAVDILRERNDELAMLETLDTGKSYSETRYVDIVTGADVLEYYAGLVPAIEGEQIPLRESSFVYTRREPLGVTVGIGAWNYPIQIALWKSAPALAAGNAMIFKPSEVTSLTTLKLAEIYTEAGLPDGVFNVLTGSGREVGTWLTEHPRIEKVSFTGGTTTGKKVMASASSSSLKEVTMELGGKSPLIICADADLDKAADIAMMANFYSSGQVCTNGTRVFIPAQMKAAFEAKIAERVARIRAGNPEDENTNFGPLVSFQHMESVLGYIAKGKQEGARVLCGGERLTEGDFAKGAFVAPTVFTDCTDDMTIVKEEIFGPVMSILTYETEEEVIRRANDTEYGLAAGVCTNDITRAHRIIHKLEAGICWINAWGESPAEMPVGGYKQSGVGRENGISSLAQYTRIKSVQVELGGYSSVF</sequence>
<proteinExistence type="inferred from homology"/>
<accession>B1J2K9</accession>
<dbReference type="EC" id="1.2.1.8" evidence="1"/>
<dbReference type="EMBL" id="CP000949">
    <property type="protein sequence ID" value="ACA70908.1"/>
    <property type="molecule type" value="Genomic_DNA"/>
</dbReference>
<dbReference type="SMR" id="B1J2K9"/>
<dbReference type="STRING" id="390235.PputW619_0402"/>
<dbReference type="KEGG" id="ppw:PputW619_0402"/>
<dbReference type="eggNOG" id="COG1012">
    <property type="taxonomic scope" value="Bacteria"/>
</dbReference>
<dbReference type="HOGENOM" id="CLU_005391_0_0_6"/>
<dbReference type="OrthoDB" id="9812625at2"/>
<dbReference type="UniPathway" id="UPA00529">
    <property type="reaction ID" value="UER00386"/>
</dbReference>
<dbReference type="GO" id="GO:0008802">
    <property type="term" value="F:betaine-aldehyde dehydrogenase (NAD+) activity"/>
    <property type="evidence" value="ECO:0007669"/>
    <property type="project" value="UniProtKB-UniRule"/>
</dbReference>
<dbReference type="GO" id="GO:0046872">
    <property type="term" value="F:metal ion binding"/>
    <property type="evidence" value="ECO:0007669"/>
    <property type="project" value="UniProtKB-KW"/>
</dbReference>
<dbReference type="GO" id="GO:0019285">
    <property type="term" value="P:glycine betaine biosynthetic process from choline"/>
    <property type="evidence" value="ECO:0007669"/>
    <property type="project" value="UniProtKB-UniRule"/>
</dbReference>
<dbReference type="CDD" id="cd07090">
    <property type="entry name" value="ALDH_F9_TMBADH"/>
    <property type="match status" value="1"/>
</dbReference>
<dbReference type="FunFam" id="3.40.309.10:FF:000014">
    <property type="entry name" value="NAD/NADP-dependent betaine aldehyde dehydrogenase"/>
    <property type="match status" value="1"/>
</dbReference>
<dbReference type="FunFam" id="3.40.605.10:FF:000007">
    <property type="entry name" value="NAD/NADP-dependent betaine aldehyde dehydrogenase"/>
    <property type="match status" value="1"/>
</dbReference>
<dbReference type="Gene3D" id="3.40.605.10">
    <property type="entry name" value="Aldehyde Dehydrogenase, Chain A, domain 1"/>
    <property type="match status" value="1"/>
</dbReference>
<dbReference type="Gene3D" id="3.40.309.10">
    <property type="entry name" value="Aldehyde Dehydrogenase, Chain A, domain 2"/>
    <property type="match status" value="1"/>
</dbReference>
<dbReference type="HAMAP" id="MF_00804">
    <property type="entry name" value="BADH"/>
    <property type="match status" value="1"/>
</dbReference>
<dbReference type="InterPro" id="IPR016161">
    <property type="entry name" value="Ald_DH/histidinol_DH"/>
</dbReference>
<dbReference type="InterPro" id="IPR016163">
    <property type="entry name" value="Ald_DH_C"/>
</dbReference>
<dbReference type="InterPro" id="IPR016160">
    <property type="entry name" value="Ald_DH_CS_CYS"/>
</dbReference>
<dbReference type="InterPro" id="IPR029510">
    <property type="entry name" value="Ald_DH_CS_GLU"/>
</dbReference>
<dbReference type="InterPro" id="IPR016162">
    <property type="entry name" value="Ald_DH_N"/>
</dbReference>
<dbReference type="InterPro" id="IPR015590">
    <property type="entry name" value="Aldehyde_DH_dom"/>
</dbReference>
<dbReference type="InterPro" id="IPR011264">
    <property type="entry name" value="BADH"/>
</dbReference>
<dbReference type="NCBIfam" id="TIGR01804">
    <property type="entry name" value="BADH"/>
    <property type="match status" value="1"/>
</dbReference>
<dbReference type="NCBIfam" id="NF009725">
    <property type="entry name" value="PRK13252.1"/>
    <property type="match status" value="1"/>
</dbReference>
<dbReference type="PANTHER" id="PTHR11699">
    <property type="entry name" value="ALDEHYDE DEHYDROGENASE-RELATED"/>
    <property type="match status" value="1"/>
</dbReference>
<dbReference type="Pfam" id="PF00171">
    <property type="entry name" value="Aldedh"/>
    <property type="match status" value="1"/>
</dbReference>
<dbReference type="SUPFAM" id="SSF53720">
    <property type="entry name" value="ALDH-like"/>
    <property type="match status" value="1"/>
</dbReference>
<dbReference type="PROSITE" id="PS00070">
    <property type="entry name" value="ALDEHYDE_DEHYDR_CYS"/>
    <property type="match status" value="1"/>
</dbReference>
<dbReference type="PROSITE" id="PS00687">
    <property type="entry name" value="ALDEHYDE_DEHYDR_GLU"/>
    <property type="match status" value="1"/>
</dbReference>